<reference key="1">
    <citation type="submission" date="2006-12" db="EMBL/GenBank/DDBJ databases">
        <title>Complete sequence of chromosome 1 of Verminephrobacter eiseniae EF01-2.</title>
        <authorList>
            <person name="Copeland A."/>
            <person name="Lucas S."/>
            <person name="Lapidus A."/>
            <person name="Barry K."/>
            <person name="Detter J.C."/>
            <person name="Glavina del Rio T."/>
            <person name="Dalin E."/>
            <person name="Tice H."/>
            <person name="Pitluck S."/>
            <person name="Chertkov O."/>
            <person name="Brettin T."/>
            <person name="Bruce D."/>
            <person name="Han C."/>
            <person name="Tapia R."/>
            <person name="Gilna P."/>
            <person name="Schmutz J."/>
            <person name="Larimer F."/>
            <person name="Land M."/>
            <person name="Hauser L."/>
            <person name="Kyrpides N."/>
            <person name="Kim E."/>
            <person name="Stahl D."/>
            <person name="Richardson P."/>
        </authorList>
    </citation>
    <scope>NUCLEOTIDE SEQUENCE [LARGE SCALE GENOMIC DNA]</scope>
    <source>
        <strain>EF01-2</strain>
    </source>
</reference>
<organism>
    <name type="scientific">Verminephrobacter eiseniae (strain EF01-2)</name>
    <dbReference type="NCBI Taxonomy" id="391735"/>
    <lineage>
        <taxon>Bacteria</taxon>
        <taxon>Pseudomonadati</taxon>
        <taxon>Pseudomonadota</taxon>
        <taxon>Betaproteobacteria</taxon>
        <taxon>Burkholderiales</taxon>
        <taxon>Comamonadaceae</taxon>
        <taxon>Verminephrobacter</taxon>
    </lineage>
</organism>
<name>METK_VEREI</name>
<comment type="function">
    <text evidence="1">Catalyzes the formation of S-adenosylmethionine (AdoMet) from methionine and ATP. The overall synthetic reaction is composed of two sequential steps, AdoMet formation and the subsequent tripolyphosphate hydrolysis which occurs prior to release of AdoMet from the enzyme.</text>
</comment>
<comment type="catalytic activity">
    <reaction evidence="1">
        <text>L-methionine + ATP + H2O = S-adenosyl-L-methionine + phosphate + diphosphate</text>
        <dbReference type="Rhea" id="RHEA:21080"/>
        <dbReference type="ChEBI" id="CHEBI:15377"/>
        <dbReference type="ChEBI" id="CHEBI:30616"/>
        <dbReference type="ChEBI" id="CHEBI:33019"/>
        <dbReference type="ChEBI" id="CHEBI:43474"/>
        <dbReference type="ChEBI" id="CHEBI:57844"/>
        <dbReference type="ChEBI" id="CHEBI:59789"/>
        <dbReference type="EC" id="2.5.1.6"/>
    </reaction>
</comment>
<comment type="cofactor">
    <cofactor evidence="1">
        <name>Mg(2+)</name>
        <dbReference type="ChEBI" id="CHEBI:18420"/>
    </cofactor>
    <text evidence="1">Binds 2 divalent ions per subunit.</text>
</comment>
<comment type="cofactor">
    <cofactor evidence="1">
        <name>K(+)</name>
        <dbReference type="ChEBI" id="CHEBI:29103"/>
    </cofactor>
    <text evidence="1">Binds 1 potassium ion per subunit.</text>
</comment>
<comment type="pathway">
    <text evidence="1">Amino-acid biosynthesis; S-adenosyl-L-methionine biosynthesis; S-adenosyl-L-methionine from L-methionine: step 1/1.</text>
</comment>
<comment type="subunit">
    <text evidence="1">Homotetramer; dimer of dimers.</text>
</comment>
<comment type="subcellular location">
    <subcellularLocation>
        <location evidence="1">Cytoplasm</location>
    </subcellularLocation>
</comment>
<comment type="similarity">
    <text evidence="1">Belongs to the AdoMet synthase family.</text>
</comment>
<evidence type="ECO:0000255" key="1">
    <source>
        <dbReference type="HAMAP-Rule" id="MF_00086"/>
    </source>
</evidence>
<proteinExistence type="inferred from homology"/>
<accession>A1WSC8</accession>
<protein>
    <recommendedName>
        <fullName evidence="1">S-adenosylmethionine synthase</fullName>
        <shortName evidence="1">AdoMet synthase</shortName>
        <ecNumber evidence="1">2.5.1.6</ecNumber>
    </recommendedName>
    <alternativeName>
        <fullName evidence="1">MAT</fullName>
    </alternativeName>
    <alternativeName>
        <fullName evidence="1">Methionine adenosyltransferase</fullName>
    </alternativeName>
</protein>
<keyword id="KW-0067">ATP-binding</keyword>
<keyword id="KW-0963">Cytoplasm</keyword>
<keyword id="KW-0460">Magnesium</keyword>
<keyword id="KW-0479">Metal-binding</keyword>
<keyword id="KW-0547">Nucleotide-binding</keyword>
<keyword id="KW-0554">One-carbon metabolism</keyword>
<keyword id="KW-0630">Potassium</keyword>
<keyword id="KW-1185">Reference proteome</keyword>
<keyword id="KW-0808">Transferase</keyword>
<sequence length="403" mass="44032">MANDFLFTSESVSEGHPDKVADQISDAILDALLRQDPRSRVAAETLTNTGLVVLAGEISTNAHVDYIQVARDTIRRIGYDDTDYGIDYKGCAVLVAYDKQSNDIAQGVDHASDDHLNTGAGDQGLMFGYACDETPELMPAPIYYAHRLVERQAQLRKDGRLPFLRPDAKSQVTLRYVDGKPHSIDTVVLSTQHHPDQSATATTMKQSFIDAVIEEIIRPVLPKEWLHDTRFLINPTGRFVTGGPQGDCGLTGRKIIVDTYGGACPHGGGAFSGKDPTKVDRSAAYAARHVAKNVVAAGLARQCQIQVAYAIGVAEPMNITVYTEGTGVIADERIAALIKQHFDLRPRGIIQMLDLLRPIYEKTAAYGHFGREEPEFTWERTDKAAALRAAAGLSPGEHHRKEG</sequence>
<feature type="chain" id="PRO_0000303000" description="S-adenosylmethionine synthase">
    <location>
        <begin position="1"/>
        <end position="403"/>
    </location>
</feature>
<feature type="region of interest" description="Flexible loop" evidence="1">
    <location>
        <begin position="100"/>
        <end position="110"/>
    </location>
</feature>
<feature type="binding site" description="in other chain" evidence="1">
    <location>
        <position position="16"/>
    </location>
    <ligand>
        <name>ATP</name>
        <dbReference type="ChEBI" id="CHEBI:30616"/>
        <note>ligand shared between two neighboring subunits</note>
    </ligand>
</feature>
<feature type="binding site" evidence="1">
    <location>
        <position position="18"/>
    </location>
    <ligand>
        <name>Mg(2+)</name>
        <dbReference type="ChEBI" id="CHEBI:18420"/>
    </ligand>
</feature>
<feature type="binding site" evidence="1">
    <location>
        <position position="44"/>
    </location>
    <ligand>
        <name>K(+)</name>
        <dbReference type="ChEBI" id="CHEBI:29103"/>
    </ligand>
</feature>
<feature type="binding site" description="in other chain" evidence="1">
    <location>
        <position position="57"/>
    </location>
    <ligand>
        <name>L-methionine</name>
        <dbReference type="ChEBI" id="CHEBI:57844"/>
        <note>ligand shared between two neighboring subunits</note>
    </ligand>
</feature>
<feature type="binding site" description="in other chain" evidence="1">
    <location>
        <position position="100"/>
    </location>
    <ligand>
        <name>L-methionine</name>
        <dbReference type="ChEBI" id="CHEBI:57844"/>
        <note>ligand shared between two neighboring subunits</note>
    </ligand>
</feature>
<feature type="binding site" description="in other chain" evidence="1">
    <location>
        <begin position="167"/>
        <end position="169"/>
    </location>
    <ligand>
        <name>ATP</name>
        <dbReference type="ChEBI" id="CHEBI:30616"/>
        <note>ligand shared between two neighboring subunits</note>
    </ligand>
</feature>
<feature type="binding site" description="in other chain" evidence="1">
    <location>
        <begin position="238"/>
        <end position="239"/>
    </location>
    <ligand>
        <name>ATP</name>
        <dbReference type="ChEBI" id="CHEBI:30616"/>
        <note>ligand shared between two neighboring subunits</note>
    </ligand>
</feature>
<feature type="binding site" evidence="1">
    <location>
        <position position="247"/>
    </location>
    <ligand>
        <name>ATP</name>
        <dbReference type="ChEBI" id="CHEBI:30616"/>
        <note>ligand shared between two neighboring subunits</note>
    </ligand>
</feature>
<feature type="binding site" evidence="1">
    <location>
        <position position="247"/>
    </location>
    <ligand>
        <name>L-methionine</name>
        <dbReference type="ChEBI" id="CHEBI:57844"/>
        <note>ligand shared between two neighboring subunits</note>
    </ligand>
</feature>
<feature type="binding site" description="in other chain" evidence="1">
    <location>
        <begin position="253"/>
        <end position="254"/>
    </location>
    <ligand>
        <name>ATP</name>
        <dbReference type="ChEBI" id="CHEBI:30616"/>
        <note>ligand shared between two neighboring subunits</note>
    </ligand>
</feature>
<feature type="binding site" evidence="1">
    <location>
        <position position="270"/>
    </location>
    <ligand>
        <name>ATP</name>
        <dbReference type="ChEBI" id="CHEBI:30616"/>
        <note>ligand shared between two neighboring subunits</note>
    </ligand>
</feature>
<feature type="binding site" evidence="1">
    <location>
        <position position="274"/>
    </location>
    <ligand>
        <name>ATP</name>
        <dbReference type="ChEBI" id="CHEBI:30616"/>
        <note>ligand shared between two neighboring subunits</note>
    </ligand>
</feature>
<feature type="binding site" description="in other chain" evidence="1">
    <location>
        <position position="278"/>
    </location>
    <ligand>
        <name>L-methionine</name>
        <dbReference type="ChEBI" id="CHEBI:57844"/>
        <note>ligand shared between two neighboring subunits</note>
    </ligand>
</feature>
<gene>
    <name evidence="1" type="primary">metK</name>
    <name type="ordered locus">Veis_4844</name>
</gene>
<dbReference type="EC" id="2.5.1.6" evidence="1"/>
<dbReference type="EMBL" id="CP000542">
    <property type="protein sequence ID" value="ABM60535.1"/>
    <property type="molecule type" value="Genomic_DNA"/>
</dbReference>
<dbReference type="RefSeq" id="WP_011812513.1">
    <property type="nucleotide sequence ID" value="NC_008786.1"/>
</dbReference>
<dbReference type="SMR" id="A1WSC8"/>
<dbReference type="STRING" id="391735.Veis_4844"/>
<dbReference type="GeneID" id="76463109"/>
<dbReference type="KEGG" id="vei:Veis_4844"/>
<dbReference type="eggNOG" id="COG0192">
    <property type="taxonomic scope" value="Bacteria"/>
</dbReference>
<dbReference type="HOGENOM" id="CLU_041802_1_1_4"/>
<dbReference type="OrthoDB" id="9801686at2"/>
<dbReference type="UniPathway" id="UPA00315">
    <property type="reaction ID" value="UER00080"/>
</dbReference>
<dbReference type="Proteomes" id="UP000000374">
    <property type="component" value="Chromosome"/>
</dbReference>
<dbReference type="GO" id="GO:0005737">
    <property type="term" value="C:cytoplasm"/>
    <property type="evidence" value="ECO:0007669"/>
    <property type="project" value="UniProtKB-SubCell"/>
</dbReference>
<dbReference type="GO" id="GO:0005524">
    <property type="term" value="F:ATP binding"/>
    <property type="evidence" value="ECO:0007669"/>
    <property type="project" value="UniProtKB-UniRule"/>
</dbReference>
<dbReference type="GO" id="GO:0000287">
    <property type="term" value="F:magnesium ion binding"/>
    <property type="evidence" value="ECO:0007669"/>
    <property type="project" value="UniProtKB-UniRule"/>
</dbReference>
<dbReference type="GO" id="GO:0004478">
    <property type="term" value="F:methionine adenosyltransferase activity"/>
    <property type="evidence" value="ECO:0007669"/>
    <property type="project" value="UniProtKB-UniRule"/>
</dbReference>
<dbReference type="GO" id="GO:0006730">
    <property type="term" value="P:one-carbon metabolic process"/>
    <property type="evidence" value="ECO:0007669"/>
    <property type="project" value="UniProtKB-KW"/>
</dbReference>
<dbReference type="GO" id="GO:0006556">
    <property type="term" value="P:S-adenosylmethionine biosynthetic process"/>
    <property type="evidence" value="ECO:0007669"/>
    <property type="project" value="UniProtKB-UniRule"/>
</dbReference>
<dbReference type="CDD" id="cd18079">
    <property type="entry name" value="S-AdoMet_synt"/>
    <property type="match status" value="1"/>
</dbReference>
<dbReference type="FunFam" id="3.30.300.10:FF:000003">
    <property type="entry name" value="S-adenosylmethionine synthase"/>
    <property type="match status" value="1"/>
</dbReference>
<dbReference type="FunFam" id="3.30.300.10:FF:000004">
    <property type="entry name" value="S-adenosylmethionine synthase"/>
    <property type="match status" value="1"/>
</dbReference>
<dbReference type="Gene3D" id="3.30.300.10">
    <property type="match status" value="3"/>
</dbReference>
<dbReference type="HAMAP" id="MF_00086">
    <property type="entry name" value="S_AdoMet_synth1"/>
    <property type="match status" value="1"/>
</dbReference>
<dbReference type="InterPro" id="IPR022631">
    <property type="entry name" value="ADOMET_SYNTHASE_CS"/>
</dbReference>
<dbReference type="InterPro" id="IPR022630">
    <property type="entry name" value="S-AdoMet_synt_C"/>
</dbReference>
<dbReference type="InterPro" id="IPR022629">
    <property type="entry name" value="S-AdoMet_synt_central"/>
</dbReference>
<dbReference type="InterPro" id="IPR022628">
    <property type="entry name" value="S-AdoMet_synt_N"/>
</dbReference>
<dbReference type="InterPro" id="IPR002133">
    <property type="entry name" value="S-AdoMet_synthetase"/>
</dbReference>
<dbReference type="InterPro" id="IPR022636">
    <property type="entry name" value="S-AdoMet_synthetase_sfam"/>
</dbReference>
<dbReference type="NCBIfam" id="TIGR01034">
    <property type="entry name" value="metK"/>
    <property type="match status" value="1"/>
</dbReference>
<dbReference type="PANTHER" id="PTHR11964">
    <property type="entry name" value="S-ADENOSYLMETHIONINE SYNTHETASE"/>
    <property type="match status" value="1"/>
</dbReference>
<dbReference type="Pfam" id="PF02773">
    <property type="entry name" value="S-AdoMet_synt_C"/>
    <property type="match status" value="1"/>
</dbReference>
<dbReference type="Pfam" id="PF02772">
    <property type="entry name" value="S-AdoMet_synt_M"/>
    <property type="match status" value="1"/>
</dbReference>
<dbReference type="Pfam" id="PF00438">
    <property type="entry name" value="S-AdoMet_synt_N"/>
    <property type="match status" value="1"/>
</dbReference>
<dbReference type="PIRSF" id="PIRSF000497">
    <property type="entry name" value="MAT"/>
    <property type="match status" value="1"/>
</dbReference>
<dbReference type="SUPFAM" id="SSF55973">
    <property type="entry name" value="S-adenosylmethionine synthetase"/>
    <property type="match status" value="3"/>
</dbReference>
<dbReference type="PROSITE" id="PS00376">
    <property type="entry name" value="ADOMET_SYNTHASE_1"/>
    <property type="match status" value="1"/>
</dbReference>
<dbReference type="PROSITE" id="PS00377">
    <property type="entry name" value="ADOMET_SYNTHASE_2"/>
    <property type="match status" value="1"/>
</dbReference>